<feature type="chain" id="PRO_0000178723" description="Fructose-bisphosphate aldolase">
    <location>
        <begin position="1"/>
        <end position="344"/>
    </location>
</feature>
<feature type="active site" description="Proton donor" evidence="1">
    <location>
        <position position="95"/>
    </location>
</feature>
<feature type="binding site" evidence="1">
    <location>
        <position position="53"/>
    </location>
    <ligand>
        <name>D-glyceraldehyde 3-phosphate</name>
        <dbReference type="ChEBI" id="CHEBI:59776"/>
    </ligand>
</feature>
<feature type="binding site" evidence="1">
    <location>
        <position position="96"/>
    </location>
    <ligand>
        <name>Zn(2+)</name>
        <dbReference type="ChEBI" id="CHEBI:29105"/>
        <label>1</label>
        <note>catalytic</note>
    </ligand>
</feature>
<feature type="binding site" evidence="1">
    <location>
        <position position="131"/>
    </location>
    <ligand>
        <name>Zn(2+)</name>
        <dbReference type="ChEBI" id="CHEBI:29105"/>
        <label>2</label>
    </ligand>
</feature>
<feature type="binding site" evidence="1">
    <location>
        <position position="161"/>
    </location>
    <ligand>
        <name>Zn(2+)</name>
        <dbReference type="ChEBI" id="CHEBI:29105"/>
        <label>2</label>
    </ligand>
</feature>
<feature type="binding site" evidence="1">
    <location>
        <position position="212"/>
    </location>
    <ligand>
        <name>Zn(2+)</name>
        <dbReference type="ChEBI" id="CHEBI:29105"/>
        <label>1</label>
        <note>catalytic</note>
    </ligand>
</feature>
<feature type="binding site" evidence="1">
    <location>
        <position position="213"/>
    </location>
    <ligand>
        <name>dihydroxyacetone phosphate</name>
        <dbReference type="ChEBI" id="CHEBI:57642"/>
    </ligand>
</feature>
<feature type="binding site" evidence="1">
    <location>
        <position position="252"/>
    </location>
    <ligand>
        <name>Zn(2+)</name>
        <dbReference type="ChEBI" id="CHEBI:29105"/>
        <label>1</label>
        <note>catalytic</note>
    </ligand>
</feature>
<feature type="binding site" evidence="1">
    <location>
        <begin position="253"/>
        <end position="255"/>
    </location>
    <ligand>
        <name>dihydroxyacetone phosphate</name>
        <dbReference type="ChEBI" id="CHEBI:57642"/>
    </ligand>
</feature>
<feature type="binding site" evidence="1">
    <location>
        <begin position="274"/>
        <end position="277"/>
    </location>
    <ligand>
        <name>dihydroxyacetone phosphate</name>
        <dbReference type="ChEBI" id="CHEBI:57642"/>
    </ligand>
</feature>
<comment type="function">
    <text evidence="1">Catalyzes the aldol condensation of dihydroxyacetone phosphate (DHAP or glycerone-phosphate) with glyceraldehyde 3-phosphate (G3P) to form fructose 1,6-bisphosphate (FBP) in gluconeogenesis and the reverse reaction in glycolysis.</text>
</comment>
<comment type="catalytic activity">
    <reaction>
        <text>beta-D-fructose 1,6-bisphosphate = D-glyceraldehyde 3-phosphate + dihydroxyacetone phosphate</text>
        <dbReference type="Rhea" id="RHEA:14729"/>
        <dbReference type="ChEBI" id="CHEBI:32966"/>
        <dbReference type="ChEBI" id="CHEBI:57642"/>
        <dbReference type="ChEBI" id="CHEBI:59776"/>
        <dbReference type="EC" id="4.1.2.13"/>
    </reaction>
</comment>
<comment type="cofactor">
    <cofactor evidence="1">
        <name>Zn(2+)</name>
        <dbReference type="ChEBI" id="CHEBI:29105"/>
    </cofactor>
    <text evidence="1">Binds 2 Zn(2+) ions per subunit. One is catalytic and the other provides a structural contribution.</text>
</comment>
<comment type="pathway">
    <text>Carbohydrate degradation; glycolysis; D-glyceraldehyde 3-phosphate and glycerone phosphate from D-glucose: step 4/4.</text>
</comment>
<comment type="similarity">
    <text evidence="2">Belongs to the class II fructose-bisphosphate aldolase family.</text>
</comment>
<keyword id="KW-0324">Glycolysis</keyword>
<keyword id="KW-0456">Lyase</keyword>
<keyword id="KW-0479">Metal-binding</keyword>
<keyword id="KW-1185">Reference proteome</keyword>
<keyword id="KW-0862">Zinc</keyword>
<reference key="1">
    <citation type="journal article" date="2003" name="Proc. Natl. Acad. Sci. U.S.A.">
        <title>The complete genome sequence of Mycobacterium bovis.</title>
        <authorList>
            <person name="Garnier T."/>
            <person name="Eiglmeier K."/>
            <person name="Camus J.-C."/>
            <person name="Medina N."/>
            <person name="Mansoor H."/>
            <person name="Pryor M."/>
            <person name="Duthoy S."/>
            <person name="Grondin S."/>
            <person name="Lacroix C."/>
            <person name="Monsempe C."/>
            <person name="Simon S."/>
            <person name="Harris B."/>
            <person name="Atkin R."/>
            <person name="Doggett J."/>
            <person name="Mayes R."/>
            <person name="Keating L."/>
            <person name="Wheeler P.R."/>
            <person name="Parkhill J."/>
            <person name="Barrell B.G."/>
            <person name="Cole S.T."/>
            <person name="Gordon S.V."/>
            <person name="Hewinson R.G."/>
        </authorList>
    </citation>
    <scope>NUCLEOTIDE SEQUENCE [LARGE SCALE GENOMIC DNA]</scope>
    <source>
        <strain>ATCC BAA-935 / AF2122/97</strain>
    </source>
</reference>
<reference key="2">
    <citation type="journal article" date="2017" name="Genome Announc.">
        <title>Updated reference genome sequence and annotation of Mycobacterium bovis AF2122/97.</title>
        <authorList>
            <person name="Malone K.M."/>
            <person name="Farrell D."/>
            <person name="Stuber T.P."/>
            <person name="Schubert O.T."/>
            <person name="Aebersold R."/>
            <person name="Robbe-Austerman S."/>
            <person name="Gordon S.V."/>
        </authorList>
    </citation>
    <scope>NUCLEOTIDE SEQUENCE [LARGE SCALE GENOMIC DNA]</scope>
    <scope>GENOME REANNOTATION</scope>
    <source>
        <strain>ATCC BAA-935 / AF2122/97</strain>
    </source>
</reference>
<gene>
    <name type="primary">fba</name>
    <name type="ordered locus">BQ2027_MB0370C</name>
</gene>
<sequence>MPIATPEVYAEMLGQAKQNSYAFPAINCTSSETVNAAIKGFADAGSDGIIQFSTGGAEFGSGLGVKDMVTGAVALAEFTHVIAAKYPVNVALHTDHCPKDKLDSYVRPLLAISAQRVSKGGNPLFQSHMWDGSAVPIDENLAIAQELLKAAAAAKIILEIEIGVVGGEEDGVANEINEKLYTSPEDFEKTIEALGAGEHGKYLLAATFGNVHGVYKPGNVKLRPDILAQGQQVAAAKLGLPADAKPFDFVFHGGSGSLKSEIEEALRYGVVKMNVDTDTQYAFTRPIAGHMFTNYDGVLKVDGEVGVKKVYDPRSYLKKAEASMSQRVVQACNDLHCAGKSLTH</sequence>
<dbReference type="EC" id="4.1.2.13"/>
<dbReference type="EMBL" id="LT708304">
    <property type="protein sequence ID" value="SIT98930.1"/>
    <property type="molecule type" value="Genomic_DNA"/>
</dbReference>
<dbReference type="RefSeq" id="NP_854033.1">
    <property type="nucleotide sequence ID" value="NC_002945.3"/>
</dbReference>
<dbReference type="SMR" id="P67476"/>
<dbReference type="PATRIC" id="fig|233413.5.peg.405"/>
<dbReference type="UniPathway" id="UPA00109">
    <property type="reaction ID" value="UER00183"/>
</dbReference>
<dbReference type="Proteomes" id="UP000001419">
    <property type="component" value="Chromosome"/>
</dbReference>
<dbReference type="GO" id="GO:0005829">
    <property type="term" value="C:cytosol"/>
    <property type="evidence" value="ECO:0007669"/>
    <property type="project" value="TreeGrafter"/>
</dbReference>
<dbReference type="GO" id="GO:0004332">
    <property type="term" value="F:fructose-bisphosphate aldolase activity"/>
    <property type="evidence" value="ECO:0007669"/>
    <property type="project" value="UniProtKB-EC"/>
</dbReference>
<dbReference type="GO" id="GO:0008270">
    <property type="term" value="F:zinc ion binding"/>
    <property type="evidence" value="ECO:0007669"/>
    <property type="project" value="InterPro"/>
</dbReference>
<dbReference type="GO" id="GO:0006096">
    <property type="term" value="P:glycolytic process"/>
    <property type="evidence" value="ECO:0007669"/>
    <property type="project" value="UniProtKB-UniPathway"/>
</dbReference>
<dbReference type="FunFam" id="3.20.20.70:FF:000112">
    <property type="entry name" value="Fructose-bisphosphate aldolase Fba"/>
    <property type="match status" value="1"/>
</dbReference>
<dbReference type="Gene3D" id="3.20.20.70">
    <property type="entry name" value="Aldolase class I"/>
    <property type="match status" value="1"/>
</dbReference>
<dbReference type="InterPro" id="IPR013785">
    <property type="entry name" value="Aldolase_TIM"/>
</dbReference>
<dbReference type="InterPro" id="IPR000771">
    <property type="entry name" value="FBA_II"/>
</dbReference>
<dbReference type="InterPro" id="IPR006411">
    <property type="entry name" value="Fruct_bisP_bact"/>
</dbReference>
<dbReference type="NCBIfam" id="TIGR00167">
    <property type="entry name" value="cbbA"/>
    <property type="match status" value="1"/>
</dbReference>
<dbReference type="NCBIfam" id="TIGR01520">
    <property type="entry name" value="FruBisAldo_II_A"/>
    <property type="match status" value="1"/>
</dbReference>
<dbReference type="NCBIfam" id="NF006628">
    <property type="entry name" value="PRK09197.1"/>
    <property type="match status" value="1"/>
</dbReference>
<dbReference type="PANTHER" id="PTHR30559:SF0">
    <property type="entry name" value="FRUCTOSE-BISPHOSPHATE ALDOLASE"/>
    <property type="match status" value="1"/>
</dbReference>
<dbReference type="PANTHER" id="PTHR30559">
    <property type="entry name" value="FRUCTOSE-BISPHOSPHATE ALDOLASE CLASS 2"/>
    <property type="match status" value="1"/>
</dbReference>
<dbReference type="Pfam" id="PF01116">
    <property type="entry name" value="F_bP_aldolase"/>
    <property type="match status" value="1"/>
</dbReference>
<dbReference type="PIRSF" id="PIRSF001359">
    <property type="entry name" value="F_bP_aldolase_II"/>
    <property type="match status" value="1"/>
</dbReference>
<dbReference type="SUPFAM" id="SSF51569">
    <property type="entry name" value="Aldolase"/>
    <property type="match status" value="1"/>
</dbReference>
<dbReference type="PROSITE" id="PS00602">
    <property type="entry name" value="ALDOLASE_CLASS_II_1"/>
    <property type="match status" value="1"/>
</dbReference>
<dbReference type="PROSITE" id="PS00806">
    <property type="entry name" value="ALDOLASE_CLASS_II_2"/>
    <property type="match status" value="1"/>
</dbReference>
<accession>P67476</accession>
<accession>A0A1R3XW71</accession>
<accession>O06313</accession>
<accession>X2BEQ4</accession>
<name>ALF_MYCBO</name>
<organism>
    <name type="scientific">Mycobacterium bovis (strain ATCC BAA-935 / AF2122/97)</name>
    <dbReference type="NCBI Taxonomy" id="233413"/>
    <lineage>
        <taxon>Bacteria</taxon>
        <taxon>Bacillati</taxon>
        <taxon>Actinomycetota</taxon>
        <taxon>Actinomycetes</taxon>
        <taxon>Mycobacteriales</taxon>
        <taxon>Mycobacteriaceae</taxon>
        <taxon>Mycobacterium</taxon>
        <taxon>Mycobacterium tuberculosis complex</taxon>
    </lineage>
</organism>
<protein>
    <recommendedName>
        <fullName>Fructose-bisphosphate aldolase</fullName>
        <shortName>FBP aldolase</shortName>
        <shortName>FBPA</shortName>
        <ecNumber>4.1.2.13</ecNumber>
    </recommendedName>
    <alternativeName>
        <fullName>Fructose-1,6-bisphosphate aldolase</fullName>
    </alternativeName>
</protein>
<proteinExistence type="inferred from homology"/>
<evidence type="ECO:0000250" key="1"/>
<evidence type="ECO:0000305" key="2"/>